<dbReference type="EMBL" id="CP000934">
    <property type="protein sequence ID" value="ACE83214.1"/>
    <property type="molecule type" value="Genomic_DNA"/>
</dbReference>
<dbReference type="RefSeq" id="WP_012486363.1">
    <property type="nucleotide sequence ID" value="NC_010995.1"/>
</dbReference>
<dbReference type="SMR" id="B3PK38"/>
<dbReference type="STRING" id="498211.CJA_0700"/>
<dbReference type="KEGG" id="cja:CJA_0700"/>
<dbReference type="eggNOG" id="COG0088">
    <property type="taxonomic scope" value="Bacteria"/>
</dbReference>
<dbReference type="HOGENOM" id="CLU_041575_5_2_6"/>
<dbReference type="OrthoDB" id="9803201at2"/>
<dbReference type="Proteomes" id="UP000001036">
    <property type="component" value="Chromosome"/>
</dbReference>
<dbReference type="GO" id="GO:1990904">
    <property type="term" value="C:ribonucleoprotein complex"/>
    <property type="evidence" value="ECO:0007669"/>
    <property type="project" value="UniProtKB-KW"/>
</dbReference>
<dbReference type="GO" id="GO:0005840">
    <property type="term" value="C:ribosome"/>
    <property type="evidence" value="ECO:0007669"/>
    <property type="project" value="UniProtKB-KW"/>
</dbReference>
<dbReference type="GO" id="GO:0019843">
    <property type="term" value="F:rRNA binding"/>
    <property type="evidence" value="ECO:0007669"/>
    <property type="project" value="UniProtKB-UniRule"/>
</dbReference>
<dbReference type="GO" id="GO:0003735">
    <property type="term" value="F:structural constituent of ribosome"/>
    <property type="evidence" value="ECO:0007669"/>
    <property type="project" value="InterPro"/>
</dbReference>
<dbReference type="GO" id="GO:0006412">
    <property type="term" value="P:translation"/>
    <property type="evidence" value="ECO:0007669"/>
    <property type="project" value="UniProtKB-UniRule"/>
</dbReference>
<dbReference type="FunFam" id="3.40.1370.10:FF:000001">
    <property type="entry name" value="50S ribosomal protein L4"/>
    <property type="match status" value="1"/>
</dbReference>
<dbReference type="Gene3D" id="3.40.1370.10">
    <property type="match status" value="1"/>
</dbReference>
<dbReference type="HAMAP" id="MF_01328_B">
    <property type="entry name" value="Ribosomal_uL4_B"/>
    <property type="match status" value="1"/>
</dbReference>
<dbReference type="InterPro" id="IPR002136">
    <property type="entry name" value="Ribosomal_uL4"/>
</dbReference>
<dbReference type="InterPro" id="IPR013005">
    <property type="entry name" value="Ribosomal_uL4-like"/>
</dbReference>
<dbReference type="InterPro" id="IPR023574">
    <property type="entry name" value="Ribosomal_uL4_dom_sf"/>
</dbReference>
<dbReference type="NCBIfam" id="TIGR03953">
    <property type="entry name" value="rplD_bact"/>
    <property type="match status" value="1"/>
</dbReference>
<dbReference type="PANTHER" id="PTHR10746">
    <property type="entry name" value="50S RIBOSOMAL PROTEIN L4"/>
    <property type="match status" value="1"/>
</dbReference>
<dbReference type="PANTHER" id="PTHR10746:SF6">
    <property type="entry name" value="LARGE RIBOSOMAL SUBUNIT PROTEIN UL4M"/>
    <property type="match status" value="1"/>
</dbReference>
<dbReference type="Pfam" id="PF00573">
    <property type="entry name" value="Ribosomal_L4"/>
    <property type="match status" value="1"/>
</dbReference>
<dbReference type="SUPFAM" id="SSF52166">
    <property type="entry name" value="Ribosomal protein L4"/>
    <property type="match status" value="1"/>
</dbReference>
<comment type="function">
    <text evidence="1">One of the primary rRNA binding proteins, this protein initially binds near the 5'-end of the 23S rRNA. It is important during the early stages of 50S assembly. It makes multiple contacts with different domains of the 23S rRNA in the assembled 50S subunit and ribosome.</text>
</comment>
<comment type="function">
    <text evidence="1">Forms part of the polypeptide exit tunnel.</text>
</comment>
<comment type="subunit">
    <text evidence="1">Part of the 50S ribosomal subunit.</text>
</comment>
<comment type="similarity">
    <text evidence="1">Belongs to the universal ribosomal protein uL4 family.</text>
</comment>
<accession>B3PK38</accession>
<reference key="1">
    <citation type="journal article" date="2008" name="J. Bacteriol.">
        <title>Insights into plant cell wall degradation from the genome sequence of the soil bacterium Cellvibrio japonicus.</title>
        <authorList>
            <person name="DeBoy R.T."/>
            <person name="Mongodin E.F."/>
            <person name="Fouts D.E."/>
            <person name="Tailford L.E."/>
            <person name="Khouri H."/>
            <person name="Emerson J.B."/>
            <person name="Mohamoud Y."/>
            <person name="Watkins K."/>
            <person name="Henrissat B."/>
            <person name="Gilbert H.J."/>
            <person name="Nelson K.E."/>
        </authorList>
    </citation>
    <scope>NUCLEOTIDE SEQUENCE [LARGE SCALE GENOMIC DNA]</scope>
    <source>
        <strain>Ueda107</strain>
    </source>
</reference>
<keyword id="KW-1185">Reference proteome</keyword>
<keyword id="KW-0687">Ribonucleoprotein</keyword>
<keyword id="KW-0689">Ribosomal protein</keyword>
<keyword id="KW-0694">RNA-binding</keyword>
<keyword id="KW-0699">rRNA-binding</keyword>
<gene>
    <name evidence="1" type="primary">rplD</name>
    <name type="ordered locus">CJA_0700</name>
</gene>
<organism>
    <name type="scientific">Cellvibrio japonicus (strain Ueda107)</name>
    <name type="common">Pseudomonas fluorescens subsp. cellulosa</name>
    <dbReference type="NCBI Taxonomy" id="498211"/>
    <lineage>
        <taxon>Bacteria</taxon>
        <taxon>Pseudomonadati</taxon>
        <taxon>Pseudomonadota</taxon>
        <taxon>Gammaproteobacteria</taxon>
        <taxon>Cellvibrionales</taxon>
        <taxon>Cellvibrionaceae</taxon>
        <taxon>Cellvibrio</taxon>
    </lineage>
</organism>
<feature type="chain" id="PRO_1000142097" description="Large ribosomal subunit protein uL4">
    <location>
        <begin position="1"/>
        <end position="204"/>
    </location>
</feature>
<feature type="region of interest" description="Disordered" evidence="2">
    <location>
        <begin position="47"/>
        <end position="69"/>
    </location>
</feature>
<evidence type="ECO:0000255" key="1">
    <source>
        <dbReference type="HAMAP-Rule" id="MF_01328"/>
    </source>
</evidence>
<evidence type="ECO:0000256" key="2">
    <source>
        <dbReference type="SAM" id="MobiDB-lite"/>
    </source>
</evidence>
<evidence type="ECO:0000305" key="3"/>
<protein>
    <recommendedName>
        <fullName evidence="1">Large ribosomal subunit protein uL4</fullName>
    </recommendedName>
    <alternativeName>
        <fullName evidence="3">50S ribosomal protein L4</fullName>
    </alternativeName>
</protein>
<sequence length="204" mass="22323">MELKIVNPGGAQGTVNVSEVAFGREFNQDLVHQAVVAYMAGARQGTKAQKTRAEVSGGGKKPWRQKGTGRARAGTIRSPIWRGGGVTFAAKPRDFEQKLNRKMYRAALQCILSELNRQDRLIVVESFDVDAPKTKALVQKLAQYDLTDALIVTEDLSENLYLASRNLHKVGVSDVQGVDPVSLIGYDKVVVTVPALKKFEEILG</sequence>
<proteinExistence type="inferred from homology"/>
<name>RL4_CELJU</name>